<dbReference type="EMBL" id="AP008971">
    <property type="protein sequence ID" value="BAG07931.1"/>
    <property type="molecule type" value="Genomic_DNA"/>
</dbReference>
<dbReference type="RefSeq" id="WP_002838638.1">
    <property type="nucleotide sequence ID" value="NC_010376.1"/>
</dbReference>
<dbReference type="SMR" id="B0S0K7"/>
<dbReference type="STRING" id="334413.FMG_0513"/>
<dbReference type="KEGG" id="fma:FMG_0513"/>
<dbReference type="eggNOG" id="COG0718">
    <property type="taxonomic scope" value="Bacteria"/>
</dbReference>
<dbReference type="HOGENOM" id="CLU_140930_1_0_9"/>
<dbReference type="Proteomes" id="UP000001319">
    <property type="component" value="Chromosome"/>
</dbReference>
<dbReference type="GO" id="GO:0043590">
    <property type="term" value="C:bacterial nucleoid"/>
    <property type="evidence" value="ECO:0007669"/>
    <property type="project" value="UniProtKB-UniRule"/>
</dbReference>
<dbReference type="GO" id="GO:0005829">
    <property type="term" value="C:cytosol"/>
    <property type="evidence" value="ECO:0007669"/>
    <property type="project" value="TreeGrafter"/>
</dbReference>
<dbReference type="GO" id="GO:0003677">
    <property type="term" value="F:DNA binding"/>
    <property type="evidence" value="ECO:0007669"/>
    <property type="project" value="UniProtKB-UniRule"/>
</dbReference>
<dbReference type="Gene3D" id="3.30.1310.10">
    <property type="entry name" value="Nucleoid-associated protein YbaB-like domain"/>
    <property type="match status" value="1"/>
</dbReference>
<dbReference type="HAMAP" id="MF_00274">
    <property type="entry name" value="DNA_YbaB_EbfC"/>
    <property type="match status" value="1"/>
</dbReference>
<dbReference type="InterPro" id="IPR036894">
    <property type="entry name" value="YbaB-like_sf"/>
</dbReference>
<dbReference type="InterPro" id="IPR004401">
    <property type="entry name" value="YbaB/EbfC"/>
</dbReference>
<dbReference type="NCBIfam" id="TIGR00103">
    <property type="entry name" value="DNA_YbaB_EbfC"/>
    <property type="match status" value="1"/>
</dbReference>
<dbReference type="PANTHER" id="PTHR33449">
    <property type="entry name" value="NUCLEOID-ASSOCIATED PROTEIN YBAB"/>
    <property type="match status" value="1"/>
</dbReference>
<dbReference type="PANTHER" id="PTHR33449:SF1">
    <property type="entry name" value="NUCLEOID-ASSOCIATED PROTEIN YBAB"/>
    <property type="match status" value="1"/>
</dbReference>
<dbReference type="Pfam" id="PF02575">
    <property type="entry name" value="YbaB_DNA_bd"/>
    <property type="match status" value="1"/>
</dbReference>
<dbReference type="PIRSF" id="PIRSF004555">
    <property type="entry name" value="UCP004555"/>
    <property type="match status" value="1"/>
</dbReference>
<dbReference type="SUPFAM" id="SSF82607">
    <property type="entry name" value="YbaB-like"/>
    <property type="match status" value="1"/>
</dbReference>
<comment type="function">
    <text evidence="1">Binds to DNA and alters its conformation. May be involved in regulation of gene expression, nucleoid organization and DNA protection.</text>
</comment>
<comment type="subunit">
    <text evidence="1">Homodimer.</text>
</comment>
<comment type="subcellular location">
    <subcellularLocation>
        <location evidence="1">Cytoplasm</location>
        <location evidence="1">Nucleoid</location>
    </subcellularLocation>
</comment>
<comment type="similarity">
    <text evidence="1">Belongs to the YbaB/EbfC family.</text>
</comment>
<evidence type="ECO:0000255" key="1">
    <source>
        <dbReference type="HAMAP-Rule" id="MF_00274"/>
    </source>
</evidence>
<evidence type="ECO:0000256" key="2">
    <source>
        <dbReference type="SAM" id="MobiDB-lite"/>
    </source>
</evidence>
<proteinExistence type="inferred from homology"/>
<protein>
    <recommendedName>
        <fullName evidence="1">Nucleoid-associated protein FMG_0513</fullName>
    </recommendedName>
</protein>
<name>Y513_FINM2</name>
<reference key="1">
    <citation type="journal article" date="2008" name="DNA Res.">
        <title>Complete genome sequence of Finegoldia magna, an anaerobic opportunistic pathogen.</title>
        <authorList>
            <person name="Goto T."/>
            <person name="Yamashita A."/>
            <person name="Hirakawa H."/>
            <person name="Matsutani M."/>
            <person name="Todo K."/>
            <person name="Ohshima K."/>
            <person name="Toh H."/>
            <person name="Miyamoto K."/>
            <person name="Kuhara S."/>
            <person name="Hattori M."/>
            <person name="Shimizu T."/>
            <person name="Akimoto S."/>
        </authorList>
    </citation>
    <scope>NUCLEOTIDE SEQUENCE [LARGE SCALE GENOMIC DNA]</scope>
    <source>
        <strain>ATCC 29328 / DSM 20472 / WAL 2508</strain>
    </source>
</reference>
<accession>B0S0K7</accession>
<sequence>MGNKFRGGMPGMGNMGNMMKQMQKMQRQMEETQKRLEETEVTATSGGGAIEVVANGKKEIVSIKIDEDLVKDGDVEMLQDMVMVAVNDAIKKVLDMSESELGKITGGINIPGF</sequence>
<keyword id="KW-0963">Cytoplasm</keyword>
<keyword id="KW-0238">DNA-binding</keyword>
<keyword id="KW-1185">Reference proteome</keyword>
<organism>
    <name type="scientific">Finegoldia magna (strain ATCC 29328 / DSM 20472 / WAL 2508)</name>
    <name type="common">Peptostreptococcus magnus</name>
    <dbReference type="NCBI Taxonomy" id="334413"/>
    <lineage>
        <taxon>Bacteria</taxon>
        <taxon>Bacillati</taxon>
        <taxon>Bacillota</taxon>
        <taxon>Tissierellia</taxon>
        <taxon>Tissierellales</taxon>
        <taxon>Peptoniphilaceae</taxon>
        <taxon>Finegoldia</taxon>
    </lineage>
</organism>
<feature type="chain" id="PRO_1000119325" description="Nucleoid-associated protein FMG_0513">
    <location>
        <begin position="1"/>
        <end position="113"/>
    </location>
</feature>
<feature type="region of interest" description="Disordered" evidence="2">
    <location>
        <begin position="1"/>
        <end position="44"/>
    </location>
</feature>
<feature type="compositionally biased region" description="Low complexity" evidence="2">
    <location>
        <begin position="15"/>
        <end position="26"/>
    </location>
</feature>
<feature type="compositionally biased region" description="Basic and acidic residues" evidence="2">
    <location>
        <begin position="27"/>
        <end position="38"/>
    </location>
</feature>
<gene>
    <name type="ordered locus">FMG_0513</name>
</gene>